<comment type="function">
    <text evidence="1">Catalyzes a mechanistically unusual reaction, the ATP-dependent insertion of CO2 between the N7 and N8 nitrogen atoms of 7,8-diaminopelargonic acid (DAPA, also called 7,8-diammoniononanoate) to form a ureido ring.</text>
</comment>
<comment type="catalytic activity">
    <reaction evidence="1">
        <text>(7R,8S)-7,8-diammoniononanoate + CO2 + ATP = (4R,5S)-dethiobiotin + ADP + phosphate + 3 H(+)</text>
        <dbReference type="Rhea" id="RHEA:15805"/>
        <dbReference type="ChEBI" id="CHEBI:15378"/>
        <dbReference type="ChEBI" id="CHEBI:16526"/>
        <dbReference type="ChEBI" id="CHEBI:30616"/>
        <dbReference type="ChEBI" id="CHEBI:43474"/>
        <dbReference type="ChEBI" id="CHEBI:149469"/>
        <dbReference type="ChEBI" id="CHEBI:149473"/>
        <dbReference type="ChEBI" id="CHEBI:456216"/>
        <dbReference type="EC" id="6.3.3.3"/>
    </reaction>
</comment>
<comment type="cofactor">
    <cofactor evidence="1">
        <name>Mg(2+)</name>
        <dbReference type="ChEBI" id="CHEBI:18420"/>
    </cofactor>
</comment>
<comment type="pathway">
    <text evidence="1">Cofactor biosynthesis; biotin biosynthesis; biotin from 7,8-diaminononanoate: step 1/2.</text>
</comment>
<comment type="subunit">
    <text evidence="1">Homodimer.</text>
</comment>
<comment type="subcellular location">
    <subcellularLocation>
        <location evidence="1">Cytoplasm</location>
    </subcellularLocation>
</comment>
<comment type="similarity">
    <text evidence="1">Belongs to the dethiobiotin synthetase family.</text>
</comment>
<sequence>MSGFFITATDTEVGKTVVAGALAGVFRELGYNIGVYKPLQSGHVASNPEGDAARLKVLSGVPTKEDEICPYSIEEPLAPRLAMKRAGRAVTLKDIIHHYNERLKEFNSLFVEGAGGLAVPYTEDALVIDFAKELQLPLIVVARPTLGTVNHTVLTIAYAKAHGLTVAGVILSGCKECEMERVQENKVMIEELSGVPVLGLLPFFEGEFTKKEVLESAKEYIMISKLEEFIRNESTVAHTSSN</sequence>
<name>BIOD_BACAH</name>
<accession>A0RIC0</accession>
<feature type="chain" id="PRO_0000302479" description="ATP-dependent dethiobiotin synthetase BioD">
    <location>
        <begin position="1"/>
        <end position="242"/>
    </location>
</feature>
<feature type="active site" evidence="1">
    <location>
        <position position="37"/>
    </location>
</feature>
<feature type="binding site" evidence="1">
    <location>
        <begin position="12"/>
        <end position="17"/>
    </location>
    <ligand>
        <name>ATP</name>
        <dbReference type="ChEBI" id="CHEBI:30616"/>
    </ligand>
</feature>
<feature type="binding site" evidence="1">
    <location>
        <position position="16"/>
    </location>
    <ligand>
        <name>Mg(2+)</name>
        <dbReference type="ChEBI" id="CHEBI:18420"/>
    </ligand>
</feature>
<feature type="binding site" evidence="1">
    <location>
        <position position="41"/>
    </location>
    <ligand>
        <name>substrate</name>
    </ligand>
</feature>
<feature type="binding site" evidence="1">
    <location>
        <position position="51"/>
    </location>
    <ligand>
        <name>ATP</name>
        <dbReference type="ChEBI" id="CHEBI:30616"/>
    </ligand>
</feature>
<feature type="binding site" evidence="1">
    <location>
        <position position="51"/>
    </location>
    <ligand>
        <name>Mg(2+)</name>
        <dbReference type="ChEBI" id="CHEBI:18420"/>
    </ligand>
</feature>
<feature type="binding site" evidence="1">
    <location>
        <begin position="112"/>
        <end position="115"/>
    </location>
    <ligand>
        <name>ATP</name>
        <dbReference type="ChEBI" id="CHEBI:30616"/>
    </ligand>
</feature>
<feature type="binding site" evidence="1">
    <location>
        <position position="112"/>
    </location>
    <ligand>
        <name>Mg(2+)</name>
        <dbReference type="ChEBI" id="CHEBI:18420"/>
    </ligand>
</feature>
<keyword id="KW-0067">ATP-binding</keyword>
<keyword id="KW-0093">Biotin biosynthesis</keyword>
<keyword id="KW-0963">Cytoplasm</keyword>
<keyword id="KW-0436">Ligase</keyword>
<keyword id="KW-0460">Magnesium</keyword>
<keyword id="KW-0479">Metal-binding</keyword>
<keyword id="KW-0547">Nucleotide-binding</keyword>
<gene>
    <name evidence="1" type="primary">bioD</name>
    <name type="ordered locus">BALH_3734</name>
</gene>
<organism>
    <name type="scientific">Bacillus thuringiensis (strain Al Hakam)</name>
    <dbReference type="NCBI Taxonomy" id="412694"/>
    <lineage>
        <taxon>Bacteria</taxon>
        <taxon>Bacillati</taxon>
        <taxon>Bacillota</taxon>
        <taxon>Bacilli</taxon>
        <taxon>Bacillales</taxon>
        <taxon>Bacillaceae</taxon>
        <taxon>Bacillus</taxon>
        <taxon>Bacillus cereus group</taxon>
    </lineage>
</organism>
<proteinExistence type="inferred from homology"/>
<evidence type="ECO:0000255" key="1">
    <source>
        <dbReference type="HAMAP-Rule" id="MF_00336"/>
    </source>
</evidence>
<reference key="1">
    <citation type="journal article" date="2007" name="J. Bacteriol.">
        <title>The complete genome sequence of Bacillus thuringiensis Al Hakam.</title>
        <authorList>
            <person name="Challacombe J.F."/>
            <person name="Altherr M.R."/>
            <person name="Xie G."/>
            <person name="Bhotika S.S."/>
            <person name="Brown N."/>
            <person name="Bruce D."/>
            <person name="Campbell C.S."/>
            <person name="Campbell M.L."/>
            <person name="Chen J."/>
            <person name="Chertkov O."/>
            <person name="Cleland C."/>
            <person name="Dimitrijevic M."/>
            <person name="Doggett N.A."/>
            <person name="Fawcett J.J."/>
            <person name="Glavina T."/>
            <person name="Goodwin L.A."/>
            <person name="Green L.D."/>
            <person name="Han C.S."/>
            <person name="Hill K.K."/>
            <person name="Hitchcock P."/>
            <person name="Jackson P.J."/>
            <person name="Keim P."/>
            <person name="Kewalramani A.R."/>
            <person name="Longmire J."/>
            <person name="Lucas S."/>
            <person name="Malfatti S."/>
            <person name="Martinez D."/>
            <person name="McMurry K."/>
            <person name="Meincke L.J."/>
            <person name="Misra M."/>
            <person name="Moseman B.L."/>
            <person name="Mundt M."/>
            <person name="Munk A.C."/>
            <person name="Okinaka R.T."/>
            <person name="Parson-Quintana B."/>
            <person name="Reilly L.P."/>
            <person name="Richardson P."/>
            <person name="Robinson D.L."/>
            <person name="Saunders E."/>
            <person name="Tapia R."/>
            <person name="Tesmer J.G."/>
            <person name="Thayer N."/>
            <person name="Thompson L.S."/>
            <person name="Tice H."/>
            <person name="Ticknor L.O."/>
            <person name="Wills P.L."/>
            <person name="Gilna P."/>
            <person name="Brettin T.S."/>
        </authorList>
    </citation>
    <scope>NUCLEOTIDE SEQUENCE [LARGE SCALE GENOMIC DNA]</scope>
    <source>
        <strain>Al Hakam</strain>
    </source>
</reference>
<dbReference type="EC" id="6.3.3.3" evidence="1"/>
<dbReference type="EMBL" id="CP000485">
    <property type="protein sequence ID" value="ABK86963.1"/>
    <property type="molecule type" value="Genomic_DNA"/>
</dbReference>
<dbReference type="RefSeq" id="WP_000012500.1">
    <property type="nucleotide sequence ID" value="NC_008600.1"/>
</dbReference>
<dbReference type="SMR" id="A0RIC0"/>
<dbReference type="KEGG" id="btl:BALH_3734"/>
<dbReference type="HOGENOM" id="CLU_072551_3_0_9"/>
<dbReference type="UniPathway" id="UPA00078">
    <property type="reaction ID" value="UER00161"/>
</dbReference>
<dbReference type="GO" id="GO:0005829">
    <property type="term" value="C:cytosol"/>
    <property type="evidence" value="ECO:0007669"/>
    <property type="project" value="TreeGrafter"/>
</dbReference>
<dbReference type="GO" id="GO:0005524">
    <property type="term" value="F:ATP binding"/>
    <property type="evidence" value="ECO:0007669"/>
    <property type="project" value="UniProtKB-UniRule"/>
</dbReference>
<dbReference type="GO" id="GO:0004141">
    <property type="term" value="F:dethiobiotin synthase activity"/>
    <property type="evidence" value="ECO:0007669"/>
    <property type="project" value="UniProtKB-UniRule"/>
</dbReference>
<dbReference type="GO" id="GO:0000287">
    <property type="term" value="F:magnesium ion binding"/>
    <property type="evidence" value="ECO:0007669"/>
    <property type="project" value="UniProtKB-UniRule"/>
</dbReference>
<dbReference type="GO" id="GO:0009102">
    <property type="term" value="P:biotin biosynthetic process"/>
    <property type="evidence" value="ECO:0007669"/>
    <property type="project" value="UniProtKB-UniRule"/>
</dbReference>
<dbReference type="CDD" id="cd03109">
    <property type="entry name" value="DTBS"/>
    <property type="match status" value="1"/>
</dbReference>
<dbReference type="FunFam" id="3.40.50.300:FF:001212">
    <property type="entry name" value="ATP-dependent dethiobiotin synthetase BioD"/>
    <property type="match status" value="1"/>
</dbReference>
<dbReference type="Gene3D" id="3.40.50.300">
    <property type="entry name" value="P-loop containing nucleotide triphosphate hydrolases"/>
    <property type="match status" value="1"/>
</dbReference>
<dbReference type="HAMAP" id="MF_00336">
    <property type="entry name" value="BioD"/>
    <property type="match status" value="1"/>
</dbReference>
<dbReference type="InterPro" id="IPR004472">
    <property type="entry name" value="DTB_synth_BioD"/>
</dbReference>
<dbReference type="InterPro" id="IPR027417">
    <property type="entry name" value="P-loop_NTPase"/>
</dbReference>
<dbReference type="NCBIfam" id="TIGR00347">
    <property type="entry name" value="bioD"/>
    <property type="match status" value="1"/>
</dbReference>
<dbReference type="PANTHER" id="PTHR43210:SF2">
    <property type="entry name" value="ATP-DEPENDENT DETHIOBIOTIN SYNTHETASE BIOD 2"/>
    <property type="match status" value="1"/>
</dbReference>
<dbReference type="PANTHER" id="PTHR43210">
    <property type="entry name" value="DETHIOBIOTIN SYNTHETASE"/>
    <property type="match status" value="1"/>
</dbReference>
<dbReference type="Pfam" id="PF13500">
    <property type="entry name" value="AAA_26"/>
    <property type="match status" value="1"/>
</dbReference>
<dbReference type="PIRSF" id="PIRSF006755">
    <property type="entry name" value="DTB_synth"/>
    <property type="match status" value="1"/>
</dbReference>
<dbReference type="SUPFAM" id="SSF52540">
    <property type="entry name" value="P-loop containing nucleoside triphosphate hydrolases"/>
    <property type="match status" value="1"/>
</dbReference>
<protein>
    <recommendedName>
        <fullName evidence="1">ATP-dependent dethiobiotin synthetase BioD</fullName>
        <ecNumber evidence="1">6.3.3.3</ecNumber>
    </recommendedName>
    <alternativeName>
        <fullName evidence="1">DTB synthetase</fullName>
        <shortName evidence="1">DTBS</shortName>
    </alternativeName>
    <alternativeName>
        <fullName evidence="1">Dethiobiotin synthase</fullName>
    </alternativeName>
</protein>